<sequence>QKACTMDYFPVCCQIVLGGGAYTAGNPCSCQGFVASKGTCDNPYPCPCTTEAQFPVCCTTQWGLVSATGNCACGCMGGVPVSDGPCPEVY</sequence>
<dbReference type="GO" id="GO:0030246">
    <property type="term" value="F:carbohydrate binding"/>
    <property type="evidence" value="ECO:0000314"/>
    <property type="project" value="UniProtKB"/>
</dbReference>
<evidence type="ECO:0000255" key="1"/>
<evidence type="ECO:0000269" key="2">
    <source>
    </source>
</evidence>
<evidence type="ECO:0000303" key="3">
    <source>
    </source>
</evidence>
<evidence type="ECO:0000305" key="4"/>
<reference evidence="4" key="1">
    <citation type="journal article" date="2005" name="Protein Sci.">
        <title>HCA and HML isolated from the red marine algae Hypnea cervicornis and Hypnea musciformis define a novel lectin family.</title>
        <authorList>
            <person name="Nagano C.S."/>
            <person name="Debray H."/>
            <person name="Nascimento K.S."/>
            <person name="Pinto V.P.T."/>
            <person name="Cavada B.S."/>
            <person name="Saker-Sampaio S."/>
            <person name="Farias W.R.L."/>
            <person name="Sampaio A.H."/>
            <person name="Calvete J.J."/>
        </authorList>
    </citation>
    <scope>PROTEIN SEQUENCE</scope>
    <scope>PYROGLUTAMATE FORMATION AT GLN-1</scope>
    <scope>FUNCTION</scope>
    <scope>CLEAVAGE</scope>
    <scope>DISULFIDE BONDS</scope>
    <scope>MASS SPECTROMETRY</scope>
</reference>
<feature type="chain" id="PRO_0000245158" description="Lectin-1">
    <location>
        <begin position="1"/>
        <end position="90"/>
    </location>
</feature>
<feature type="chain" id="PRO_0000245159" description="Lectin-1 N-terminal subunit">
    <location>
        <begin position="1"/>
        <end position="50"/>
    </location>
</feature>
<feature type="chain" id="PRO_0000245160" description="Lectin-1 C-terminal subunit">
    <location>
        <begin position="51"/>
        <end position="90"/>
    </location>
</feature>
<feature type="modified residue" description="Pyrrolidone carboxylic acid" evidence="2">
    <location>
        <position position="1"/>
    </location>
</feature>
<feature type="disulfide bond" description="Interchain (between N-terminal and C-terminal subunits)" evidence="1 3">
    <location>
        <begin position="46"/>
        <end position="71"/>
    </location>
</feature>
<protein>
    <recommendedName>
        <fullName>Lectin-1</fullName>
    </recommendedName>
    <alternativeName>
        <fullName>HCA</fullName>
    </alternativeName>
    <component>
        <recommendedName>
            <fullName>Lectin-1 N-terminal subunit</fullName>
        </recommendedName>
    </component>
    <component>
        <recommendedName>
            <fullName>Lectin-1 C-terminal subunit</fullName>
        </recommendedName>
    </component>
</protein>
<proteinExistence type="evidence at protein level"/>
<organism>
    <name type="scientific">Hypnea cervicornis</name>
    <name type="common">Brazilian red alga</name>
    <dbReference type="NCBI Taxonomy" id="387623"/>
    <lineage>
        <taxon>Eukaryota</taxon>
        <taxon>Rhodophyta</taxon>
        <taxon>Florideophyceae</taxon>
        <taxon>Rhodymeniophycidae</taxon>
        <taxon>Gigartinales</taxon>
        <taxon>Hypneaceae</taxon>
        <taxon>Hypnea</taxon>
    </lineage>
</organism>
<name>LEC1_HYPCE</name>
<accession>P84870</accession>
<comment type="function">
    <text evidence="2">Lectin with specificity for complex N-linked glycans and O-linked glycans. Has hemagglutinating activity towards rabbit erythrocytes that is inhibited by N-acetyl-D-galactosamine.</text>
</comment>
<comment type="PTM">
    <text evidence="2">The N-terminus is blocked.</text>
</comment>
<comment type="PTM">
    <text evidence="2 4">Contains seven disulfide bonds.</text>
</comment>
<comment type="PTM">
    <text evidence="2">Proteolytically cleaved. Major form may consist of cleaved, disulfide-bonded subunits.</text>
</comment>
<comment type="mass spectrometry">
    <molecule>Lectin-1</molecule>
    <text>The measured mass is that of the native single chain.</text>
</comment>
<comment type="mass spectrometry">
    <molecule>Lectin-1</molecule>
    <text>The measured mass is that of the reduced and carbamidomethylated single chain.</text>
</comment>
<comment type="mass spectrometry">
    <molecule>Lectin-1 N-terminal subunit</molecule>
    <text>The measured mass is that of the reduced and carbamidomethylated N-terminal subunit.</text>
</comment>
<comment type="mass spectrometry">
    <molecule>Lectin-1 C-terminal subunit</molecule>
    <text>The measured mass is that of the reduced and carbamidomethylated C-terminal subunit.</text>
</comment>
<keyword id="KW-0903">Direct protein sequencing</keyword>
<keyword id="KW-1015">Disulfide bond</keyword>
<keyword id="KW-0348">Hemagglutinin</keyword>
<keyword id="KW-0430">Lectin</keyword>
<keyword id="KW-0873">Pyrrolidone carboxylic acid</keyword>